<comment type="function">
    <text evidence="1">Involved in protein export. Acts as a chaperone by maintaining the newly synthesized protein in an open conformation. Functions as a peptidyl-prolyl cis-trans isomerase.</text>
</comment>
<comment type="catalytic activity">
    <reaction evidence="1">
        <text>[protein]-peptidylproline (omega=180) = [protein]-peptidylproline (omega=0)</text>
        <dbReference type="Rhea" id="RHEA:16237"/>
        <dbReference type="Rhea" id="RHEA-COMP:10747"/>
        <dbReference type="Rhea" id="RHEA-COMP:10748"/>
        <dbReference type="ChEBI" id="CHEBI:83833"/>
        <dbReference type="ChEBI" id="CHEBI:83834"/>
        <dbReference type="EC" id="5.2.1.8"/>
    </reaction>
</comment>
<comment type="subcellular location">
    <subcellularLocation>
        <location>Cytoplasm</location>
    </subcellularLocation>
    <text evidence="1">About half TF is bound to the ribosome near the polypeptide exit tunnel while the other half is free in the cytoplasm.</text>
</comment>
<comment type="domain">
    <text evidence="1">Consists of 3 domains; the N-terminus binds the ribosome, the middle domain has PPIase activity, while the C-terminus has intrinsic chaperone activity on its own.</text>
</comment>
<comment type="similarity">
    <text evidence="1">Belongs to the FKBP-type PPIase family. Tig subfamily.</text>
</comment>
<accession>A5UE12</accession>
<keyword id="KW-0131">Cell cycle</keyword>
<keyword id="KW-0132">Cell division</keyword>
<keyword id="KW-0143">Chaperone</keyword>
<keyword id="KW-0963">Cytoplasm</keyword>
<keyword id="KW-0413">Isomerase</keyword>
<keyword id="KW-0697">Rotamase</keyword>
<evidence type="ECO:0000255" key="1">
    <source>
        <dbReference type="HAMAP-Rule" id="MF_00303"/>
    </source>
</evidence>
<reference key="1">
    <citation type="journal article" date="2007" name="Genome Biol.">
        <title>Characterization and modeling of the Haemophilus influenzae core and supragenomes based on the complete genomic sequences of Rd and 12 clinical nontypeable strains.</title>
        <authorList>
            <person name="Hogg J.S."/>
            <person name="Hu F.Z."/>
            <person name="Janto B."/>
            <person name="Boissy R."/>
            <person name="Hayes J."/>
            <person name="Keefe R."/>
            <person name="Post J.C."/>
            <person name="Ehrlich G.D."/>
        </authorList>
    </citation>
    <scope>NUCLEOTIDE SEQUENCE [LARGE SCALE GENOMIC DNA]</scope>
    <source>
        <strain>PittEE</strain>
    </source>
</reference>
<protein>
    <recommendedName>
        <fullName evidence="1">Trigger factor</fullName>
        <shortName evidence="1">TF</shortName>
        <ecNumber evidence="1">5.2.1.8</ecNumber>
    </recommendedName>
    <alternativeName>
        <fullName evidence="1">PPIase</fullName>
    </alternativeName>
</protein>
<name>TIG_HAEIE</name>
<organism>
    <name type="scientific">Haemophilus influenzae (strain PittEE)</name>
    <dbReference type="NCBI Taxonomy" id="374930"/>
    <lineage>
        <taxon>Bacteria</taxon>
        <taxon>Pseudomonadati</taxon>
        <taxon>Pseudomonadota</taxon>
        <taxon>Gammaproteobacteria</taxon>
        <taxon>Pasteurellales</taxon>
        <taxon>Pasteurellaceae</taxon>
        <taxon>Haemophilus</taxon>
    </lineage>
</organism>
<feature type="chain" id="PRO_1000022685" description="Trigger factor">
    <location>
        <begin position="1"/>
        <end position="432"/>
    </location>
</feature>
<feature type="domain" description="PPIase FKBP-type" evidence="1">
    <location>
        <begin position="161"/>
        <end position="246"/>
    </location>
</feature>
<proteinExistence type="inferred from homology"/>
<gene>
    <name evidence="1" type="primary">tig</name>
    <name type="ordered locus">CGSHiEE_08560</name>
</gene>
<sequence length="432" mass="48319">MSLNIETTQGLERRVAITVPTEIVSKAVREEFKRAAKNVRVDGFRKGHVPAHIIEQRFGASIRQDVLNDLLPRHFFDAVIAEKINIAGRPTFAIETFEEGKDLVFTATFEVYPEVKLQGLENIKVEKPTVEITEADIDKMIDVLRKQQATWAESQDVVKADDRVTIDFVGSVDGEEFEGGKATDFVLFMGQGRMIPGFEEGIIGHKAGEQFDIDVTFPAEYHAENLKGKAAKFAITLKKIENMVLPELTDEFVAKFGPNTKSVADLRAEIRKNMERELKNALVSRVKQQVINGLIEQNPIDVPASAVEEEINVLRNQAAQRFGGNAQQTAQLPRELFEAEATRRVQVGLLFSEVIKSNELKADEERAKAMIADIASAYEQPAEVVEYYSKNEELMNNIRNVVLEEQAVDAVLAKAQVTEKVSSFDEIMNPQA</sequence>
<dbReference type="EC" id="5.2.1.8" evidence="1"/>
<dbReference type="EMBL" id="CP000671">
    <property type="protein sequence ID" value="ABQ99013.1"/>
    <property type="molecule type" value="Genomic_DNA"/>
</dbReference>
<dbReference type="SMR" id="A5UE12"/>
<dbReference type="KEGG" id="hip:CGSHiEE_08560"/>
<dbReference type="HOGENOM" id="CLU_033058_2_0_6"/>
<dbReference type="GO" id="GO:0005737">
    <property type="term" value="C:cytoplasm"/>
    <property type="evidence" value="ECO:0007669"/>
    <property type="project" value="UniProtKB-SubCell"/>
</dbReference>
<dbReference type="GO" id="GO:0003755">
    <property type="term" value="F:peptidyl-prolyl cis-trans isomerase activity"/>
    <property type="evidence" value="ECO:0007669"/>
    <property type="project" value="UniProtKB-UniRule"/>
</dbReference>
<dbReference type="GO" id="GO:0044183">
    <property type="term" value="F:protein folding chaperone"/>
    <property type="evidence" value="ECO:0007669"/>
    <property type="project" value="TreeGrafter"/>
</dbReference>
<dbReference type="GO" id="GO:0043022">
    <property type="term" value="F:ribosome binding"/>
    <property type="evidence" value="ECO:0007669"/>
    <property type="project" value="TreeGrafter"/>
</dbReference>
<dbReference type="GO" id="GO:0051083">
    <property type="term" value="P:'de novo' cotranslational protein folding"/>
    <property type="evidence" value="ECO:0007669"/>
    <property type="project" value="TreeGrafter"/>
</dbReference>
<dbReference type="GO" id="GO:0051301">
    <property type="term" value="P:cell division"/>
    <property type="evidence" value="ECO:0007669"/>
    <property type="project" value="UniProtKB-KW"/>
</dbReference>
<dbReference type="GO" id="GO:0061077">
    <property type="term" value="P:chaperone-mediated protein folding"/>
    <property type="evidence" value="ECO:0007669"/>
    <property type="project" value="TreeGrafter"/>
</dbReference>
<dbReference type="GO" id="GO:0015031">
    <property type="term" value="P:protein transport"/>
    <property type="evidence" value="ECO:0007669"/>
    <property type="project" value="UniProtKB-UniRule"/>
</dbReference>
<dbReference type="GO" id="GO:0043335">
    <property type="term" value="P:protein unfolding"/>
    <property type="evidence" value="ECO:0007669"/>
    <property type="project" value="TreeGrafter"/>
</dbReference>
<dbReference type="FunFam" id="3.10.50.40:FF:000001">
    <property type="entry name" value="Trigger factor"/>
    <property type="match status" value="1"/>
</dbReference>
<dbReference type="Gene3D" id="3.10.50.40">
    <property type="match status" value="1"/>
</dbReference>
<dbReference type="Gene3D" id="3.30.70.1050">
    <property type="entry name" value="Trigger factor ribosome-binding domain"/>
    <property type="match status" value="1"/>
</dbReference>
<dbReference type="Gene3D" id="1.10.3120.10">
    <property type="entry name" value="Trigger factor, C-terminal domain"/>
    <property type="match status" value="1"/>
</dbReference>
<dbReference type="HAMAP" id="MF_00303">
    <property type="entry name" value="Trigger_factor_Tig"/>
    <property type="match status" value="1"/>
</dbReference>
<dbReference type="InterPro" id="IPR046357">
    <property type="entry name" value="PPIase_dom_sf"/>
</dbReference>
<dbReference type="InterPro" id="IPR001179">
    <property type="entry name" value="PPIase_FKBP_dom"/>
</dbReference>
<dbReference type="InterPro" id="IPR005215">
    <property type="entry name" value="Trig_fac"/>
</dbReference>
<dbReference type="InterPro" id="IPR008880">
    <property type="entry name" value="Trigger_fac_C"/>
</dbReference>
<dbReference type="InterPro" id="IPR037041">
    <property type="entry name" value="Trigger_fac_C_sf"/>
</dbReference>
<dbReference type="InterPro" id="IPR008881">
    <property type="entry name" value="Trigger_fac_ribosome-bd_bac"/>
</dbReference>
<dbReference type="InterPro" id="IPR036611">
    <property type="entry name" value="Trigger_fac_ribosome-bd_sf"/>
</dbReference>
<dbReference type="InterPro" id="IPR027304">
    <property type="entry name" value="Trigger_fact/SurA_dom_sf"/>
</dbReference>
<dbReference type="NCBIfam" id="TIGR00115">
    <property type="entry name" value="tig"/>
    <property type="match status" value="1"/>
</dbReference>
<dbReference type="PANTHER" id="PTHR30560">
    <property type="entry name" value="TRIGGER FACTOR CHAPERONE AND PEPTIDYL-PROLYL CIS/TRANS ISOMERASE"/>
    <property type="match status" value="1"/>
</dbReference>
<dbReference type="PANTHER" id="PTHR30560:SF3">
    <property type="entry name" value="TRIGGER FACTOR-LIKE PROTEIN TIG, CHLOROPLASTIC"/>
    <property type="match status" value="1"/>
</dbReference>
<dbReference type="Pfam" id="PF00254">
    <property type="entry name" value="FKBP_C"/>
    <property type="match status" value="1"/>
</dbReference>
<dbReference type="Pfam" id="PF05698">
    <property type="entry name" value="Trigger_C"/>
    <property type="match status" value="1"/>
</dbReference>
<dbReference type="Pfam" id="PF05697">
    <property type="entry name" value="Trigger_N"/>
    <property type="match status" value="1"/>
</dbReference>
<dbReference type="PIRSF" id="PIRSF003095">
    <property type="entry name" value="Trigger_factor"/>
    <property type="match status" value="1"/>
</dbReference>
<dbReference type="SUPFAM" id="SSF54534">
    <property type="entry name" value="FKBP-like"/>
    <property type="match status" value="1"/>
</dbReference>
<dbReference type="SUPFAM" id="SSF109998">
    <property type="entry name" value="Triger factor/SurA peptide-binding domain-like"/>
    <property type="match status" value="1"/>
</dbReference>
<dbReference type="SUPFAM" id="SSF102735">
    <property type="entry name" value="Trigger factor ribosome-binding domain"/>
    <property type="match status" value="1"/>
</dbReference>
<dbReference type="PROSITE" id="PS50059">
    <property type="entry name" value="FKBP_PPIASE"/>
    <property type="match status" value="1"/>
</dbReference>